<name>RL25_THET2</name>
<keyword id="KW-0002">3D-structure</keyword>
<keyword id="KW-0687">Ribonucleoprotein</keyword>
<keyword id="KW-0689">Ribosomal protein</keyword>
<keyword id="KW-0694">RNA-binding</keyword>
<keyword id="KW-0699">rRNA-binding</keyword>
<protein>
    <recommendedName>
        <fullName evidence="1">Large ribosomal subunit protein bL25</fullName>
    </recommendedName>
    <alternativeName>
        <fullName evidence="3">50S ribosomal protein L25</fullName>
    </alternativeName>
    <alternativeName>
        <fullName evidence="1">General stress protein CTC</fullName>
    </alternativeName>
</protein>
<feature type="chain" id="PRO_0000181607" description="Large ribosomal subunit protein bL25">
    <location>
        <begin position="1"/>
        <end position="206"/>
    </location>
</feature>
<feature type="region of interest" description="Disordered" evidence="2">
    <location>
        <begin position="184"/>
        <end position="206"/>
    </location>
</feature>
<feature type="compositionally biased region" description="Basic and acidic residues" evidence="2">
    <location>
        <begin position="195"/>
        <end position="206"/>
    </location>
</feature>
<feature type="strand" evidence="5">
    <location>
        <begin position="4"/>
        <end position="6"/>
    </location>
</feature>
<feature type="strand" evidence="6">
    <location>
        <begin position="11"/>
        <end position="13"/>
    </location>
</feature>
<feature type="helix" evidence="5">
    <location>
        <begin position="15"/>
        <end position="21"/>
    </location>
</feature>
<feature type="strand" evidence="5">
    <location>
        <begin position="23"/>
        <end position="29"/>
    </location>
</feature>
<feature type="strand" evidence="5">
    <location>
        <begin position="34"/>
        <end position="40"/>
    </location>
</feature>
<feature type="helix" evidence="5">
    <location>
        <begin position="41"/>
        <end position="51"/>
    </location>
</feature>
<feature type="turn" evidence="5">
    <location>
        <begin position="52"/>
        <end position="54"/>
    </location>
</feature>
<feature type="strand" evidence="5">
    <location>
        <begin position="57"/>
        <end position="60"/>
    </location>
</feature>
<feature type="strand" evidence="5">
    <location>
        <begin position="66"/>
        <end position="76"/>
    </location>
</feature>
<feature type="strand" evidence="5">
    <location>
        <begin position="78"/>
        <end position="80"/>
    </location>
</feature>
<feature type="strand" evidence="5">
    <location>
        <begin position="83"/>
        <end position="90"/>
    </location>
</feature>
<feature type="strand" evidence="5">
    <location>
        <begin position="96"/>
        <end position="101"/>
    </location>
</feature>
<feature type="strand" evidence="7">
    <location>
        <begin position="102"/>
        <end position="105"/>
    </location>
</feature>
<feature type="helix" evidence="5">
    <location>
        <begin position="109"/>
        <end position="112"/>
    </location>
</feature>
<feature type="strand" evidence="5">
    <location>
        <begin position="116"/>
        <end position="118"/>
    </location>
</feature>
<feature type="strand" evidence="5">
    <location>
        <begin position="122"/>
        <end position="128"/>
    </location>
</feature>
<feature type="strand" evidence="4">
    <location>
        <begin position="137"/>
        <end position="139"/>
    </location>
</feature>
<feature type="strand" evidence="5">
    <location>
        <begin position="149"/>
        <end position="151"/>
    </location>
</feature>
<feature type="helix" evidence="4">
    <location>
        <begin position="152"/>
        <end position="154"/>
    </location>
</feature>
<feature type="strand" evidence="5">
    <location>
        <begin position="162"/>
        <end position="165"/>
    </location>
</feature>
<feature type="strand" evidence="5">
    <location>
        <begin position="170"/>
        <end position="175"/>
    </location>
</feature>
<feature type="helix" evidence="5">
    <location>
        <begin position="181"/>
        <end position="188"/>
    </location>
</feature>
<sequence>MEYRLKAYYREGEKPSALRRAGKLPGVMYNRHLNRKVYVDLVEFDKVFRQASIHHVIVLELPDGQSLPTLVRQVNLDKRRRRPEHVDFFVLSDEPVEMYVPLRFVGTPAGVRAGGVLQEIHRDILVKVSPRNIPEFIEVDVSGLEIGDSLHASDLKLPPGVELAVSPEETIAAVVPPEDVEKLAEEAAAEVAEPEVIKKGKEEEEE</sequence>
<reference key="1">
    <citation type="journal article" date="2004" name="Nat. Biotechnol.">
        <title>The genome sequence of the extreme thermophile Thermus thermophilus.</title>
        <authorList>
            <person name="Henne A."/>
            <person name="Brueggemann H."/>
            <person name="Raasch C."/>
            <person name="Wiezer A."/>
            <person name="Hartsch T."/>
            <person name="Liesegang H."/>
            <person name="Johann A."/>
            <person name="Lienard T."/>
            <person name="Gohl O."/>
            <person name="Martinez-Arias R."/>
            <person name="Jacobi C."/>
            <person name="Starkuviene V."/>
            <person name="Schlenczeck S."/>
            <person name="Dencker S."/>
            <person name="Huber R."/>
            <person name="Klenk H.-P."/>
            <person name="Kramer W."/>
            <person name="Merkl R."/>
            <person name="Gottschalk G."/>
            <person name="Fritz H.-J."/>
        </authorList>
    </citation>
    <scope>NUCLEOTIDE SEQUENCE [LARGE SCALE GENOMIC DNA]</scope>
    <source>
        <strain>ATCC BAA-163 / DSM 7039 / HB27</strain>
    </source>
</reference>
<accession>Q72IA7</accession>
<comment type="function">
    <text evidence="1">This is one of the proteins that binds to the 5S RNA in the ribosome where it forms part of the central protuberance.</text>
</comment>
<comment type="subunit">
    <text evidence="1">Part of the 50S ribosomal subunit; part of the 5S rRNA/L5/L18/L25 subcomplex. Contacts the 5S rRNA. Binds to the 5S rRNA independently of L5 and L18.</text>
</comment>
<comment type="similarity">
    <text evidence="1">Belongs to the bacterial ribosomal protein bL25 family. CTC subfamily.</text>
</comment>
<gene>
    <name evidence="1" type="primary">rplY</name>
    <name evidence="1" type="synonym">ctc</name>
    <name type="ordered locus">TT_C1225</name>
</gene>
<proteinExistence type="evidence at protein level"/>
<dbReference type="EMBL" id="AE017221">
    <property type="protein sequence ID" value="AAS81567.1"/>
    <property type="molecule type" value="Genomic_DNA"/>
</dbReference>
<dbReference type="RefSeq" id="WP_011173631.1">
    <property type="nucleotide sequence ID" value="NC_005835.1"/>
</dbReference>
<dbReference type="PDB" id="4V4I">
    <property type="method" value="X-ray"/>
    <property type="resolution" value="3.71 A"/>
    <property type="chains" value="T=1-206"/>
</dbReference>
<dbReference type="PDB" id="4V4J">
    <property type="method" value="X-ray"/>
    <property type="resolution" value="3.83 A"/>
    <property type="chains" value="T=1-206"/>
</dbReference>
<dbReference type="PDB" id="4V63">
    <property type="method" value="X-ray"/>
    <property type="resolution" value="3.21 A"/>
    <property type="chains" value="BZ/DZ=1-206"/>
</dbReference>
<dbReference type="PDB" id="4V67">
    <property type="method" value="X-ray"/>
    <property type="resolution" value="3.00 A"/>
    <property type="chains" value="BZ/DZ=1-206"/>
</dbReference>
<dbReference type="PDB" id="4V7P">
    <property type="method" value="X-ray"/>
    <property type="resolution" value="3.62 A"/>
    <property type="chains" value="BV/CV=1-206"/>
</dbReference>
<dbReference type="PDB" id="4V83">
    <property type="method" value="X-ray"/>
    <property type="resolution" value="3.50 A"/>
    <property type="chains" value="BV/DV=3-190"/>
</dbReference>
<dbReference type="PDB" id="4V84">
    <property type="method" value="X-ray"/>
    <property type="resolution" value="3.40 A"/>
    <property type="chains" value="BV/DV=3-190"/>
</dbReference>
<dbReference type="PDB" id="4V9J">
    <property type="method" value="X-ray"/>
    <property type="resolution" value="3.86 A"/>
    <property type="chains" value="BZ/DZ=3-187"/>
</dbReference>
<dbReference type="PDB" id="4V9K">
    <property type="method" value="X-ray"/>
    <property type="resolution" value="3.50 A"/>
    <property type="chains" value="BZ/DZ=3-187"/>
</dbReference>
<dbReference type="PDB" id="4V9L">
    <property type="method" value="X-ray"/>
    <property type="resolution" value="3.50 A"/>
    <property type="chains" value="BZ/DZ=3-187"/>
</dbReference>
<dbReference type="PDB" id="4V9M">
    <property type="method" value="X-ray"/>
    <property type="resolution" value="4.00 A"/>
    <property type="chains" value="BZ/DZ=3-187"/>
</dbReference>
<dbReference type="PDB" id="4V9N">
    <property type="method" value="X-ray"/>
    <property type="resolution" value="3.40 A"/>
    <property type="chains" value="BZ/DZ=3-189"/>
</dbReference>
<dbReference type="PDB" id="4V9Q">
    <property type="method" value="X-ray"/>
    <property type="resolution" value="3.40 A"/>
    <property type="chains" value="AV/CV=3-189"/>
</dbReference>
<dbReference type="PDB" id="4W29">
    <property type="method" value="X-ray"/>
    <property type="resolution" value="3.80 A"/>
    <property type="chains" value="BZ/DZ=3-187"/>
</dbReference>
<dbReference type="PDB" id="4XEJ">
    <property type="method" value="X-ray"/>
    <property type="resolution" value="3.80 A"/>
    <property type="chains" value="AL25/BL25=3-189"/>
</dbReference>
<dbReference type="PDB" id="5J4D">
    <property type="method" value="X-ray"/>
    <property type="resolution" value="3.10 A"/>
    <property type="chains" value="BC/W=1-206"/>
</dbReference>
<dbReference type="PDB" id="5V8I">
    <property type="method" value="X-ray"/>
    <property type="resolution" value="3.25 A"/>
    <property type="chains" value="1Z/2Z=1-206"/>
</dbReference>
<dbReference type="PDB" id="6B4V">
    <property type="method" value="X-ray"/>
    <property type="resolution" value="3.40 A"/>
    <property type="chains" value="AC/W=1-206"/>
</dbReference>
<dbReference type="PDB" id="6BOH">
    <property type="method" value="X-ray"/>
    <property type="resolution" value="3.40 A"/>
    <property type="chains" value="BC/W=1-206"/>
</dbReference>
<dbReference type="PDB" id="6BOK">
    <property type="method" value="X-ray"/>
    <property type="resolution" value="3.55 A"/>
    <property type="chains" value="W/ZB=1-206"/>
</dbReference>
<dbReference type="PDB" id="6N1D">
    <property type="method" value="X-ray"/>
    <property type="resolution" value="3.20 A"/>
    <property type="chains" value="AL25/BL25=1-206"/>
</dbReference>
<dbReference type="PDBsum" id="4V4I"/>
<dbReference type="PDBsum" id="4V4J"/>
<dbReference type="PDBsum" id="4V63"/>
<dbReference type="PDBsum" id="4V67"/>
<dbReference type="PDBsum" id="4V7P"/>
<dbReference type="PDBsum" id="4V83"/>
<dbReference type="PDBsum" id="4V84"/>
<dbReference type="PDBsum" id="4V9J"/>
<dbReference type="PDBsum" id="4V9K"/>
<dbReference type="PDBsum" id="4V9L"/>
<dbReference type="PDBsum" id="4V9M"/>
<dbReference type="PDBsum" id="4V9N"/>
<dbReference type="PDBsum" id="4V9Q"/>
<dbReference type="PDBsum" id="4W29"/>
<dbReference type="PDBsum" id="4XEJ"/>
<dbReference type="PDBsum" id="5J4D"/>
<dbReference type="PDBsum" id="5V8I"/>
<dbReference type="PDBsum" id="6B4V"/>
<dbReference type="PDBsum" id="6BOH"/>
<dbReference type="PDBsum" id="6BOK"/>
<dbReference type="PDBsum" id="6N1D"/>
<dbReference type="SMR" id="Q72IA7"/>
<dbReference type="IntAct" id="Q72IA7">
    <property type="interactions" value="4"/>
</dbReference>
<dbReference type="GeneID" id="3169859"/>
<dbReference type="KEGG" id="tth:TT_C1225"/>
<dbReference type="eggNOG" id="COG1825">
    <property type="taxonomic scope" value="Bacteria"/>
</dbReference>
<dbReference type="HOGENOM" id="CLU_075939_2_0_0"/>
<dbReference type="OrthoDB" id="9790002at2"/>
<dbReference type="Proteomes" id="UP000000592">
    <property type="component" value="Chromosome"/>
</dbReference>
<dbReference type="GO" id="GO:0022625">
    <property type="term" value="C:cytosolic large ribosomal subunit"/>
    <property type="evidence" value="ECO:0007669"/>
    <property type="project" value="TreeGrafter"/>
</dbReference>
<dbReference type="GO" id="GO:0008097">
    <property type="term" value="F:5S rRNA binding"/>
    <property type="evidence" value="ECO:0007669"/>
    <property type="project" value="InterPro"/>
</dbReference>
<dbReference type="GO" id="GO:0003735">
    <property type="term" value="F:structural constituent of ribosome"/>
    <property type="evidence" value="ECO:0007669"/>
    <property type="project" value="InterPro"/>
</dbReference>
<dbReference type="GO" id="GO:0006412">
    <property type="term" value="P:translation"/>
    <property type="evidence" value="ECO:0007669"/>
    <property type="project" value="UniProtKB-UniRule"/>
</dbReference>
<dbReference type="CDD" id="cd00495">
    <property type="entry name" value="Ribosomal_L25_TL5_CTC"/>
    <property type="match status" value="1"/>
</dbReference>
<dbReference type="Gene3D" id="2.170.120.20">
    <property type="entry name" value="Ribosomal protein L25, beta domain"/>
    <property type="match status" value="1"/>
</dbReference>
<dbReference type="Gene3D" id="2.40.240.10">
    <property type="entry name" value="Ribosomal Protein L25, Chain P"/>
    <property type="match status" value="1"/>
</dbReference>
<dbReference type="HAMAP" id="MF_01334">
    <property type="entry name" value="Ribosomal_bL25_CTC"/>
    <property type="match status" value="1"/>
</dbReference>
<dbReference type="InterPro" id="IPR020056">
    <property type="entry name" value="Rbsml_bL25/Gln-tRNA_synth_N"/>
</dbReference>
<dbReference type="InterPro" id="IPR011035">
    <property type="entry name" value="Ribosomal_bL25/Gln-tRNA_synth"/>
</dbReference>
<dbReference type="InterPro" id="IPR020057">
    <property type="entry name" value="Ribosomal_bL25_b-dom"/>
</dbReference>
<dbReference type="InterPro" id="IPR037121">
    <property type="entry name" value="Ribosomal_bL25_C"/>
</dbReference>
<dbReference type="InterPro" id="IPR001021">
    <property type="entry name" value="Ribosomal_bL25_long"/>
</dbReference>
<dbReference type="InterPro" id="IPR029751">
    <property type="entry name" value="Ribosomal_L25_dom"/>
</dbReference>
<dbReference type="InterPro" id="IPR020930">
    <property type="entry name" value="Ribosomal_uL5_bac-type"/>
</dbReference>
<dbReference type="NCBIfam" id="TIGR00731">
    <property type="entry name" value="bL25_bact_ctc"/>
    <property type="match status" value="1"/>
</dbReference>
<dbReference type="PANTHER" id="PTHR33284">
    <property type="entry name" value="RIBOSOMAL PROTEIN L25/GLN-TRNA SYNTHETASE, ANTI-CODON-BINDING DOMAIN-CONTAINING PROTEIN"/>
    <property type="match status" value="1"/>
</dbReference>
<dbReference type="PANTHER" id="PTHR33284:SF1">
    <property type="entry name" value="RIBOSOMAL PROTEIN L25_GLN-TRNA SYNTHETASE, ANTI-CODON-BINDING DOMAIN-CONTAINING PROTEIN"/>
    <property type="match status" value="1"/>
</dbReference>
<dbReference type="Pfam" id="PF01386">
    <property type="entry name" value="Ribosomal_L25p"/>
    <property type="match status" value="1"/>
</dbReference>
<dbReference type="Pfam" id="PF14693">
    <property type="entry name" value="Ribosomal_TL5_C"/>
    <property type="match status" value="1"/>
</dbReference>
<dbReference type="SUPFAM" id="SSF50715">
    <property type="entry name" value="Ribosomal protein L25-like"/>
    <property type="match status" value="1"/>
</dbReference>
<evidence type="ECO:0000255" key="1">
    <source>
        <dbReference type="HAMAP-Rule" id="MF_01334"/>
    </source>
</evidence>
<evidence type="ECO:0000256" key="2">
    <source>
        <dbReference type="SAM" id="MobiDB-lite"/>
    </source>
</evidence>
<evidence type="ECO:0000305" key="3"/>
<evidence type="ECO:0007829" key="4">
    <source>
        <dbReference type="PDB" id="4V63"/>
    </source>
</evidence>
<evidence type="ECO:0007829" key="5">
    <source>
        <dbReference type="PDB" id="4V67"/>
    </source>
</evidence>
<evidence type="ECO:0007829" key="6">
    <source>
        <dbReference type="PDB" id="4V84"/>
    </source>
</evidence>
<evidence type="ECO:0007829" key="7">
    <source>
        <dbReference type="PDB" id="4V9L"/>
    </source>
</evidence>
<organism>
    <name type="scientific">Thermus thermophilus (strain ATCC BAA-163 / DSM 7039 / HB27)</name>
    <dbReference type="NCBI Taxonomy" id="262724"/>
    <lineage>
        <taxon>Bacteria</taxon>
        <taxon>Thermotogati</taxon>
        <taxon>Deinococcota</taxon>
        <taxon>Deinococci</taxon>
        <taxon>Thermales</taxon>
        <taxon>Thermaceae</taxon>
        <taxon>Thermus</taxon>
    </lineage>
</organism>